<reference key="1">
    <citation type="journal article" date="2005" name="Science">
        <title>Genome streamlining in a cosmopolitan oceanic bacterium.</title>
        <authorList>
            <person name="Giovannoni S.J."/>
            <person name="Tripp H.J."/>
            <person name="Givan S."/>
            <person name="Podar M."/>
            <person name="Vergin K.L."/>
            <person name="Baptista D."/>
            <person name="Bibbs L."/>
            <person name="Eads J."/>
            <person name="Richardson T.H."/>
            <person name="Noordewier M."/>
            <person name="Rappe M.S."/>
            <person name="Short J.M."/>
            <person name="Carrington J.C."/>
            <person name="Mathur E.J."/>
        </authorList>
    </citation>
    <scope>NUCLEOTIDE SEQUENCE [LARGE SCALE GENOMIC DNA]</scope>
    <source>
        <strain>HTCC1062</strain>
    </source>
</reference>
<keyword id="KW-0067">ATP-binding</keyword>
<keyword id="KW-0997">Cell inner membrane</keyword>
<keyword id="KW-1003">Cell membrane</keyword>
<keyword id="KW-0472">Membrane</keyword>
<keyword id="KW-0547">Nucleotide-binding</keyword>
<keyword id="KW-1185">Reference proteome</keyword>
<keyword id="KW-1278">Translocase</keyword>
<keyword id="KW-0813">Transport</keyword>
<gene>
    <name evidence="1" type="primary">tauB</name>
    <name type="ordered locus">SAR11_0806</name>
</gene>
<protein>
    <recommendedName>
        <fullName evidence="1">Taurine import ATP-binding protein TauB</fullName>
        <ecNumber evidence="1">7.6.2.7</ecNumber>
    </recommendedName>
</protein>
<comment type="function">
    <text evidence="1">Part of the ABC transporter complex TauABC involved in taurine import. Responsible for energy coupling to the transport system.</text>
</comment>
<comment type="catalytic activity">
    <reaction evidence="1">
        <text>taurine(out) + ATP + H2O = taurine(in) + ADP + phosphate + H(+)</text>
        <dbReference type="Rhea" id="RHEA:14613"/>
        <dbReference type="ChEBI" id="CHEBI:15377"/>
        <dbReference type="ChEBI" id="CHEBI:15378"/>
        <dbReference type="ChEBI" id="CHEBI:30616"/>
        <dbReference type="ChEBI" id="CHEBI:43474"/>
        <dbReference type="ChEBI" id="CHEBI:456216"/>
        <dbReference type="ChEBI" id="CHEBI:507393"/>
        <dbReference type="EC" id="7.6.2.7"/>
    </reaction>
</comment>
<comment type="subunit">
    <text evidence="1">The complex is composed of two ATP-binding proteins (TauB), two transmembrane proteins (TauC) and a solute-binding protein (TauA).</text>
</comment>
<comment type="subcellular location">
    <subcellularLocation>
        <location evidence="1">Cell inner membrane</location>
        <topology evidence="1">Peripheral membrane protein</topology>
    </subcellularLocation>
</comment>
<comment type="similarity">
    <text evidence="1">Belongs to the ABC transporter superfamily. Taurine importer (TC 3.A.1.17.1) family.</text>
</comment>
<organism>
    <name type="scientific">Pelagibacter ubique (strain HTCC1062)</name>
    <dbReference type="NCBI Taxonomy" id="335992"/>
    <lineage>
        <taxon>Bacteria</taxon>
        <taxon>Pseudomonadati</taxon>
        <taxon>Pseudomonadota</taxon>
        <taxon>Alphaproteobacteria</taxon>
        <taxon>Candidatus Pelagibacterales</taxon>
        <taxon>Candidatus Pelagibacteraceae</taxon>
        <taxon>Candidatus Pelagibacter</taxon>
    </lineage>
</organism>
<feature type="chain" id="PRO_0000275832" description="Taurine import ATP-binding protein TauB">
    <location>
        <begin position="1"/>
        <end position="265"/>
    </location>
</feature>
<feature type="domain" description="ABC transporter" evidence="1">
    <location>
        <begin position="7"/>
        <end position="236"/>
    </location>
</feature>
<feature type="binding site" evidence="1">
    <location>
        <begin position="41"/>
        <end position="48"/>
    </location>
    <ligand>
        <name>ATP</name>
        <dbReference type="ChEBI" id="CHEBI:30616"/>
    </ligand>
</feature>
<evidence type="ECO:0000255" key="1">
    <source>
        <dbReference type="HAMAP-Rule" id="MF_01714"/>
    </source>
</evidence>
<name>TAUB_PELUB</name>
<proteinExistence type="inferred from homology"/>
<sequence>MSDLISQNLNMIFKTPKGETVHALKDVNFTLKKGELLTVLGPSGCGKTTLLNITAGFLRPTSGAIALNGNEIDGPGVERGMVFQQGALFEWLTVAENVDFGLRMKKEDPVKTAKKVEEWLNIVGLQGFGNTPTYQLSGGMQQRVALARCLINDPDLILMDEPLGALDALTREKMQSLVLKIWKETGKTIILITHSVEEALLLGERLYVMAPRPGRIHKEYNLPFASMGIDGDLREIKKTPNFVSTREEILTMIWNMEEEIMGKDI</sequence>
<dbReference type="EC" id="7.6.2.7" evidence="1"/>
<dbReference type="EMBL" id="CP000084">
    <property type="protein sequence ID" value="AAZ21624.1"/>
    <property type="molecule type" value="Genomic_DNA"/>
</dbReference>
<dbReference type="RefSeq" id="WP_011281960.1">
    <property type="nucleotide sequence ID" value="NC_007205.1"/>
</dbReference>
<dbReference type="SMR" id="Q4FMG5"/>
<dbReference type="STRING" id="335992.SAR11_0806"/>
<dbReference type="GeneID" id="66295307"/>
<dbReference type="KEGG" id="pub:SAR11_0806"/>
<dbReference type="eggNOG" id="COG1116">
    <property type="taxonomic scope" value="Bacteria"/>
</dbReference>
<dbReference type="HOGENOM" id="CLU_000604_1_22_5"/>
<dbReference type="OrthoDB" id="9802264at2"/>
<dbReference type="Proteomes" id="UP000002528">
    <property type="component" value="Chromosome"/>
</dbReference>
<dbReference type="GO" id="GO:0005886">
    <property type="term" value="C:plasma membrane"/>
    <property type="evidence" value="ECO:0007669"/>
    <property type="project" value="UniProtKB-SubCell"/>
</dbReference>
<dbReference type="GO" id="GO:0015411">
    <property type="term" value="F:ABC-type taurine transporter transporter activity"/>
    <property type="evidence" value="ECO:0007669"/>
    <property type="project" value="UniProtKB-EC"/>
</dbReference>
<dbReference type="GO" id="GO:0005524">
    <property type="term" value="F:ATP binding"/>
    <property type="evidence" value="ECO:0007669"/>
    <property type="project" value="UniProtKB-KW"/>
</dbReference>
<dbReference type="GO" id="GO:0016887">
    <property type="term" value="F:ATP hydrolysis activity"/>
    <property type="evidence" value="ECO:0007669"/>
    <property type="project" value="InterPro"/>
</dbReference>
<dbReference type="CDD" id="cd03293">
    <property type="entry name" value="ABC_NrtD_SsuB_transporters"/>
    <property type="match status" value="1"/>
</dbReference>
<dbReference type="Gene3D" id="3.40.50.300">
    <property type="entry name" value="P-loop containing nucleotide triphosphate hydrolases"/>
    <property type="match status" value="1"/>
</dbReference>
<dbReference type="InterPro" id="IPR003593">
    <property type="entry name" value="AAA+_ATPase"/>
</dbReference>
<dbReference type="InterPro" id="IPR003439">
    <property type="entry name" value="ABC_transporter-like_ATP-bd"/>
</dbReference>
<dbReference type="InterPro" id="IPR017871">
    <property type="entry name" value="ABC_transporter-like_CS"/>
</dbReference>
<dbReference type="InterPro" id="IPR050166">
    <property type="entry name" value="ABC_transporter_ATP-bind"/>
</dbReference>
<dbReference type="InterPro" id="IPR027417">
    <property type="entry name" value="P-loop_NTPase"/>
</dbReference>
<dbReference type="PANTHER" id="PTHR42788:SF18">
    <property type="entry name" value="TAURINE IMPORT ATP-BINDING PROTEIN TAUB"/>
    <property type="match status" value="1"/>
</dbReference>
<dbReference type="PANTHER" id="PTHR42788">
    <property type="entry name" value="TAURINE IMPORT ATP-BINDING PROTEIN-RELATED"/>
    <property type="match status" value="1"/>
</dbReference>
<dbReference type="Pfam" id="PF00005">
    <property type="entry name" value="ABC_tran"/>
    <property type="match status" value="1"/>
</dbReference>
<dbReference type="SMART" id="SM00382">
    <property type="entry name" value="AAA"/>
    <property type="match status" value="1"/>
</dbReference>
<dbReference type="SUPFAM" id="SSF52540">
    <property type="entry name" value="P-loop containing nucleoside triphosphate hydrolases"/>
    <property type="match status" value="1"/>
</dbReference>
<dbReference type="PROSITE" id="PS00211">
    <property type="entry name" value="ABC_TRANSPORTER_1"/>
    <property type="match status" value="1"/>
</dbReference>
<dbReference type="PROSITE" id="PS50893">
    <property type="entry name" value="ABC_TRANSPORTER_2"/>
    <property type="match status" value="1"/>
</dbReference>
<dbReference type="PROSITE" id="PS51250">
    <property type="entry name" value="TAUB"/>
    <property type="match status" value="1"/>
</dbReference>
<accession>Q4FMG5</accession>